<evidence type="ECO:0000250" key="1"/>
<evidence type="ECO:0000250" key="2">
    <source>
        <dbReference type="UniProtKB" id="Q9SQU2"/>
    </source>
</evidence>
<evidence type="ECO:0000255" key="3"/>
<evidence type="ECO:0000269" key="4">
    <source>
    </source>
</evidence>
<evidence type="ECO:0000305" key="5"/>
<reference key="1">
    <citation type="journal article" date="1999" name="Nature">
        <title>Sequence and analysis of chromosome 2 of the plant Arabidopsis thaliana.</title>
        <authorList>
            <person name="Lin X."/>
            <person name="Kaul S."/>
            <person name="Rounsley S.D."/>
            <person name="Shea T.P."/>
            <person name="Benito M.-I."/>
            <person name="Town C.D."/>
            <person name="Fujii C.Y."/>
            <person name="Mason T.M."/>
            <person name="Bowman C.L."/>
            <person name="Barnstead M.E."/>
            <person name="Feldblyum T.V."/>
            <person name="Buell C.R."/>
            <person name="Ketchum K.A."/>
            <person name="Lee J.J."/>
            <person name="Ronning C.M."/>
            <person name="Koo H.L."/>
            <person name="Moffat K.S."/>
            <person name="Cronin L.A."/>
            <person name="Shen M."/>
            <person name="Pai G."/>
            <person name="Van Aken S."/>
            <person name="Umayam L."/>
            <person name="Tallon L.J."/>
            <person name="Gill J.E."/>
            <person name="Adams M.D."/>
            <person name="Carrera A.J."/>
            <person name="Creasy T.H."/>
            <person name="Goodman H.M."/>
            <person name="Somerville C.R."/>
            <person name="Copenhaver G.P."/>
            <person name="Preuss D."/>
            <person name="Nierman W.C."/>
            <person name="White O."/>
            <person name="Eisen J.A."/>
            <person name="Salzberg S.L."/>
            <person name="Fraser C.M."/>
            <person name="Venter J.C."/>
        </authorList>
    </citation>
    <scope>NUCLEOTIDE SEQUENCE [LARGE SCALE GENOMIC DNA]</scope>
    <source>
        <strain>cv. Columbia</strain>
    </source>
</reference>
<reference key="2">
    <citation type="journal article" date="2017" name="Plant J.">
        <title>Araport11: a complete reannotation of the Arabidopsis thaliana reference genome.</title>
        <authorList>
            <person name="Cheng C.Y."/>
            <person name="Krishnakumar V."/>
            <person name="Chan A.P."/>
            <person name="Thibaud-Nissen F."/>
            <person name="Schobel S."/>
            <person name="Town C.D."/>
        </authorList>
    </citation>
    <scope>GENOME REANNOTATION</scope>
    <source>
        <strain>cv. Columbia</strain>
    </source>
</reference>
<reference key="3">
    <citation type="journal article" date="2002" name="Science">
        <title>Functional annotation of a full-length Arabidopsis cDNA collection.</title>
        <authorList>
            <person name="Seki M."/>
            <person name="Narusaka M."/>
            <person name="Kamiya A."/>
            <person name="Ishida J."/>
            <person name="Satou M."/>
            <person name="Sakurai T."/>
            <person name="Nakajima M."/>
            <person name="Enju A."/>
            <person name="Akiyama K."/>
            <person name="Oono Y."/>
            <person name="Muramatsu M."/>
            <person name="Hayashizaki Y."/>
            <person name="Kawai J."/>
            <person name="Carninci P."/>
            <person name="Itoh M."/>
            <person name="Ishii Y."/>
            <person name="Arakawa T."/>
            <person name="Shibata K."/>
            <person name="Shinagawa A."/>
            <person name="Shinozaki K."/>
        </authorList>
    </citation>
    <scope>NUCLEOTIDE SEQUENCE [LARGE SCALE MRNA]</scope>
    <source>
        <strain>cv. Columbia</strain>
    </source>
</reference>
<reference key="4">
    <citation type="journal article" date="2003" name="Science">
        <title>Empirical analysis of transcriptional activity in the Arabidopsis genome.</title>
        <authorList>
            <person name="Yamada K."/>
            <person name="Lim J."/>
            <person name="Dale J.M."/>
            <person name="Chen H."/>
            <person name="Shinn P."/>
            <person name="Palm C.J."/>
            <person name="Southwick A.M."/>
            <person name="Wu H.C."/>
            <person name="Kim C.J."/>
            <person name="Nguyen M."/>
            <person name="Pham P.K."/>
            <person name="Cheuk R.F."/>
            <person name="Karlin-Newmann G."/>
            <person name="Liu S.X."/>
            <person name="Lam B."/>
            <person name="Sakano H."/>
            <person name="Wu T."/>
            <person name="Yu G."/>
            <person name="Miranda M."/>
            <person name="Quach H.L."/>
            <person name="Tripp M."/>
            <person name="Chang C.H."/>
            <person name="Lee J.M."/>
            <person name="Toriumi M.J."/>
            <person name="Chan M.M."/>
            <person name="Tang C.C."/>
            <person name="Onodera C.S."/>
            <person name="Deng J.M."/>
            <person name="Akiyama K."/>
            <person name="Ansari Y."/>
            <person name="Arakawa T."/>
            <person name="Banh J."/>
            <person name="Banno F."/>
            <person name="Bowser L."/>
            <person name="Brooks S.Y."/>
            <person name="Carninci P."/>
            <person name="Chao Q."/>
            <person name="Choy N."/>
            <person name="Enju A."/>
            <person name="Goldsmith A.D."/>
            <person name="Gurjal M."/>
            <person name="Hansen N.F."/>
            <person name="Hayashizaki Y."/>
            <person name="Johnson-Hopson C."/>
            <person name="Hsuan V.W."/>
            <person name="Iida K."/>
            <person name="Karnes M."/>
            <person name="Khan S."/>
            <person name="Koesema E."/>
            <person name="Ishida J."/>
            <person name="Jiang P.X."/>
            <person name="Jones T."/>
            <person name="Kawai J."/>
            <person name="Kamiya A."/>
            <person name="Meyers C."/>
            <person name="Nakajima M."/>
            <person name="Narusaka M."/>
            <person name="Seki M."/>
            <person name="Sakurai T."/>
            <person name="Satou M."/>
            <person name="Tamse R."/>
            <person name="Vaysberg M."/>
            <person name="Wallender E.K."/>
            <person name="Wong C."/>
            <person name="Yamamura Y."/>
            <person name="Yuan S."/>
            <person name="Shinozaki K."/>
            <person name="Davis R.W."/>
            <person name="Theologis A."/>
            <person name="Ecker J.R."/>
        </authorList>
    </citation>
    <scope>NUCLEOTIDE SEQUENCE [LARGE SCALE MRNA]</scope>
    <source>
        <strain>cv. Columbia</strain>
    </source>
</reference>
<reference key="5">
    <citation type="journal article" date="2014" name="Plant Physiol.">
        <title>Functional and evolutionary analysis of the CASPARIAN STRIP MEMBRANE DOMAIN PROTEIN family.</title>
        <authorList>
            <person name="Roppolo D."/>
            <person name="Boeckmann B."/>
            <person name="Pfister A."/>
            <person name="Boutet E."/>
            <person name="Rubio M.C."/>
            <person name="Denervaud-Tendon V."/>
            <person name="Vermeer J.E."/>
            <person name="Gheyselinck J."/>
            <person name="Xenarios I."/>
            <person name="Geldner N."/>
        </authorList>
    </citation>
    <scope>TISSUE SPECIFICITY</scope>
    <scope>DEVELOPMENTAL STAGE</scope>
    <scope>SUBCELLULAR LOCATION</scope>
    <scope>GENE FAMILY</scope>
    <scope>NOMENCLATURE</scope>
</reference>
<accession>Q8GWD5</accession>
<accession>O80640</accession>
<feature type="initiator methionine" description="Removed" evidence="2">
    <location>
        <position position="1"/>
    </location>
</feature>
<feature type="chain" id="PRO_0000308664" description="CASP-like protein 4D1">
    <location>
        <begin position="2"/>
        <end position="178"/>
    </location>
</feature>
<feature type="topological domain" description="Cytoplasmic" evidence="3">
    <location>
        <begin position="2"/>
        <end position="14"/>
    </location>
</feature>
<feature type="transmembrane region" description="Helical" evidence="3">
    <location>
        <begin position="15"/>
        <end position="35"/>
    </location>
</feature>
<feature type="topological domain" description="Extracellular" evidence="3">
    <location>
        <begin position="36"/>
        <end position="60"/>
    </location>
</feature>
<feature type="transmembrane region" description="Helical" evidence="3">
    <location>
        <begin position="61"/>
        <end position="81"/>
    </location>
</feature>
<feature type="topological domain" description="Cytoplasmic" evidence="3">
    <location>
        <begin position="82"/>
        <end position="97"/>
    </location>
</feature>
<feature type="transmembrane region" description="Helical" evidence="3">
    <location>
        <begin position="98"/>
        <end position="118"/>
    </location>
</feature>
<feature type="topological domain" description="Extracellular" evidence="3">
    <location>
        <begin position="119"/>
        <end position="149"/>
    </location>
</feature>
<feature type="transmembrane region" description="Helical" evidence="3">
    <location>
        <begin position="150"/>
        <end position="170"/>
    </location>
</feature>
<feature type="topological domain" description="Cytoplasmic" evidence="3">
    <location>
        <begin position="171"/>
        <end position="178"/>
    </location>
</feature>
<feature type="modified residue" description="N-acetylalanine" evidence="2">
    <location>
        <position position="2"/>
    </location>
</feature>
<dbReference type="EMBL" id="AC004218">
    <property type="protein sequence ID" value="AAC27844.1"/>
    <property type="status" value="ALT_SEQ"/>
    <property type="molecule type" value="Genomic_DNA"/>
</dbReference>
<dbReference type="EMBL" id="CP002685">
    <property type="protein sequence ID" value="AEC09691.1"/>
    <property type="molecule type" value="Genomic_DNA"/>
</dbReference>
<dbReference type="EMBL" id="AK118915">
    <property type="protein sequence ID" value="BAC43498.1"/>
    <property type="molecule type" value="mRNA"/>
</dbReference>
<dbReference type="EMBL" id="BT005644">
    <property type="protein sequence ID" value="AAO64064.1"/>
    <property type="molecule type" value="mRNA"/>
</dbReference>
<dbReference type="PIR" id="T00563">
    <property type="entry name" value="T00563"/>
</dbReference>
<dbReference type="RefSeq" id="NP_181485.2">
    <property type="nucleotide sequence ID" value="NM_129511.3"/>
</dbReference>
<dbReference type="BioGRID" id="3876">
    <property type="interactions" value="8"/>
</dbReference>
<dbReference type="FunCoup" id="Q8GWD5">
    <property type="interactions" value="225"/>
</dbReference>
<dbReference type="IntAct" id="Q8GWD5">
    <property type="interactions" value="8"/>
</dbReference>
<dbReference type="STRING" id="3702.Q8GWD5"/>
<dbReference type="PaxDb" id="3702-AT2G39530.1"/>
<dbReference type="ProteomicsDB" id="222706"/>
<dbReference type="EnsemblPlants" id="AT2G39530.1">
    <property type="protein sequence ID" value="AT2G39530.1"/>
    <property type="gene ID" value="AT2G39530"/>
</dbReference>
<dbReference type="GeneID" id="818538"/>
<dbReference type="Gramene" id="AT2G39530.1">
    <property type="protein sequence ID" value="AT2G39530.1"/>
    <property type="gene ID" value="AT2G39530"/>
</dbReference>
<dbReference type="KEGG" id="ath:AT2G39530"/>
<dbReference type="Araport" id="AT2G39530"/>
<dbReference type="TAIR" id="AT2G39530">
    <property type="gene designation" value="CASPL4D1"/>
</dbReference>
<dbReference type="eggNOG" id="ENOG502S98H">
    <property type="taxonomic scope" value="Eukaryota"/>
</dbReference>
<dbReference type="HOGENOM" id="CLU_115129_0_0_1"/>
<dbReference type="InParanoid" id="Q8GWD5"/>
<dbReference type="OMA" id="GTNTMEI"/>
<dbReference type="PhylomeDB" id="Q8GWD5"/>
<dbReference type="PRO" id="PR:Q8GWD5"/>
<dbReference type="Proteomes" id="UP000006548">
    <property type="component" value="Chromosome 2"/>
</dbReference>
<dbReference type="ExpressionAtlas" id="Q8GWD5">
    <property type="expression patterns" value="baseline and differential"/>
</dbReference>
<dbReference type="GO" id="GO:0005886">
    <property type="term" value="C:plasma membrane"/>
    <property type="evidence" value="ECO:0000314"/>
    <property type="project" value="UniProtKB"/>
</dbReference>
<dbReference type="InterPro" id="IPR006702">
    <property type="entry name" value="CASP_dom"/>
</dbReference>
<dbReference type="PANTHER" id="PTHR33573">
    <property type="entry name" value="CASP-LIKE PROTEIN 4A4"/>
    <property type="match status" value="1"/>
</dbReference>
<dbReference type="PANTHER" id="PTHR33573:SF44">
    <property type="entry name" value="CASP-LIKE PROTEIN 4D1"/>
    <property type="match status" value="1"/>
</dbReference>
<dbReference type="Pfam" id="PF04535">
    <property type="entry name" value="CASP_dom"/>
    <property type="match status" value="1"/>
</dbReference>
<gene>
    <name type="ordered locus">At2g39530</name>
    <name type="ORF">F12L6.19</name>
</gene>
<sequence>MAPPPPAPPSVTLRTVLLLLRVLTAAFLLITVVLISTNTVTLEISSTSIKLPFNDVYAYRYMLSAAVIGLVYAVVQLFLTISQFATGKTHPLTYQFDFYGDKVISYLLATGSAAGFGVSKDLKDTYIALIEFDSTDPVDKFFSKGYASASLLLFAFVSLAVLSVFSSLALSKRPVPVS</sequence>
<protein>
    <recommendedName>
        <fullName>CASP-like protein 4D1</fullName>
        <shortName>AtCASPL4D1</shortName>
    </recommendedName>
</protein>
<comment type="subunit">
    <text evidence="1">Homodimer and heterodimers.</text>
</comment>
<comment type="subcellular location">
    <subcellularLocation>
        <location evidence="4">Cell membrane</location>
        <topology evidence="4">Multi-pass membrane protein</topology>
    </subcellularLocation>
</comment>
<comment type="tissue specificity">
    <text evidence="4">Expressed in the root epidermis.</text>
</comment>
<comment type="developmental stage">
    <text evidence="4">In the root epidermis, expressed transiently in the root maturation zone.</text>
</comment>
<comment type="similarity">
    <text evidence="5">Belongs to the Casparian strip membrane proteins (CASP) family.</text>
</comment>
<comment type="sequence caution" evidence="5">
    <conflict type="erroneous gene model prediction">
        <sequence resource="EMBL-CDS" id="AAC27844"/>
    </conflict>
</comment>
<proteinExistence type="evidence at transcript level"/>
<organism>
    <name type="scientific">Arabidopsis thaliana</name>
    <name type="common">Mouse-ear cress</name>
    <dbReference type="NCBI Taxonomy" id="3702"/>
    <lineage>
        <taxon>Eukaryota</taxon>
        <taxon>Viridiplantae</taxon>
        <taxon>Streptophyta</taxon>
        <taxon>Embryophyta</taxon>
        <taxon>Tracheophyta</taxon>
        <taxon>Spermatophyta</taxon>
        <taxon>Magnoliopsida</taxon>
        <taxon>eudicotyledons</taxon>
        <taxon>Gunneridae</taxon>
        <taxon>Pentapetalae</taxon>
        <taxon>rosids</taxon>
        <taxon>malvids</taxon>
        <taxon>Brassicales</taxon>
        <taxon>Brassicaceae</taxon>
        <taxon>Camelineae</taxon>
        <taxon>Arabidopsis</taxon>
    </lineage>
</organism>
<name>CSPLC_ARATH</name>
<keyword id="KW-0007">Acetylation</keyword>
<keyword id="KW-1003">Cell membrane</keyword>
<keyword id="KW-0472">Membrane</keyword>
<keyword id="KW-1185">Reference proteome</keyword>
<keyword id="KW-0812">Transmembrane</keyword>
<keyword id="KW-1133">Transmembrane helix</keyword>